<protein>
    <recommendedName>
        <fullName evidence="1">Probable Fe(2+)-trafficking protein</fullName>
    </recommendedName>
</protein>
<reference key="1">
    <citation type="journal article" date="2005" name="Nucleic Acids Res.">
        <title>Genome dynamics and diversity of Shigella species, the etiologic agents of bacillary dysentery.</title>
        <authorList>
            <person name="Yang F."/>
            <person name="Yang J."/>
            <person name="Zhang X."/>
            <person name="Chen L."/>
            <person name="Jiang Y."/>
            <person name="Yan Y."/>
            <person name="Tang X."/>
            <person name="Wang J."/>
            <person name="Xiong Z."/>
            <person name="Dong J."/>
            <person name="Xue Y."/>
            <person name="Zhu Y."/>
            <person name="Xu X."/>
            <person name="Sun L."/>
            <person name="Chen S."/>
            <person name="Nie H."/>
            <person name="Peng J."/>
            <person name="Xu J."/>
            <person name="Wang Y."/>
            <person name="Yuan Z."/>
            <person name="Wen Y."/>
            <person name="Yao Z."/>
            <person name="Shen Y."/>
            <person name="Qiang B."/>
            <person name="Hou Y."/>
            <person name="Yu J."/>
            <person name="Jin Q."/>
        </authorList>
    </citation>
    <scope>NUCLEOTIDE SEQUENCE [LARGE SCALE GENOMIC DNA]</scope>
    <source>
        <strain>Sb227</strain>
    </source>
</reference>
<organism>
    <name type="scientific">Shigella boydii serotype 4 (strain Sb227)</name>
    <dbReference type="NCBI Taxonomy" id="300268"/>
    <lineage>
        <taxon>Bacteria</taxon>
        <taxon>Pseudomonadati</taxon>
        <taxon>Pseudomonadota</taxon>
        <taxon>Gammaproteobacteria</taxon>
        <taxon>Enterobacterales</taxon>
        <taxon>Enterobacteriaceae</taxon>
        <taxon>Shigella</taxon>
    </lineage>
</organism>
<evidence type="ECO:0000255" key="1">
    <source>
        <dbReference type="HAMAP-Rule" id="MF_00686"/>
    </source>
</evidence>
<proteinExistence type="inferred from homology"/>
<keyword id="KW-0408">Iron</keyword>
<comment type="function">
    <text evidence="1">Could be a mediator in iron transactions between iron acquisition and iron-requiring processes, such as synthesis and/or repair of Fe-S clusters in biosynthetic enzymes.</text>
</comment>
<comment type="subunit">
    <text evidence="1">Monomer.</text>
</comment>
<comment type="similarity">
    <text evidence="1">Belongs to the Fe(2+)-trafficking protein family.</text>
</comment>
<accession>Q31WM4</accession>
<sequence length="91" mass="10953">MSRTIFCTFLQREAEGQDFQLYPGELGKRIYNEISKEAWAQWQHKQTMLINEKKLNMMNAEHRKLLEQEMVNFLFEGKEVHIEGYTPEDKK</sequence>
<gene>
    <name evidence="1" type="primary">yggX</name>
    <name type="ordered locus">SBO_3028</name>
</gene>
<feature type="chain" id="PRO_0000246116" description="Probable Fe(2+)-trafficking protein">
    <location>
        <begin position="1"/>
        <end position="91"/>
    </location>
</feature>
<dbReference type="EMBL" id="CP000036">
    <property type="protein sequence ID" value="ABB67534.1"/>
    <property type="molecule type" value="Genomic_DNA"/>
</dbReference>
<dbReference type="RefSeq" id="WP_000091700.1">
    <property type="nucleotide sequence ID" value="NC_007613.1"/>
</dbReference>
<dbReference type="SMR" id="Q31WM4"/>
<dbReference type="KEGG" id="sbo:SBO_3028"/>
<dbReference type="HOGENOM" id="CLU_170994_0_0_6"/>
<dbReference type="Proteomes" id="UP000007067">
    <property type="component" value="Chromosome"/>
</dbReference>
<dbReference type="GO" id="GO:0005829">
    <property type="term" value="C:cytosol"/>
    <property type="evidence" value="ECO:0007669"/>
    <property type="project" value="TreeGrafter"/>
</dbReference>
<dbReference type="GO" id="GO:0005506">
    <property type="term" value="F:iron ion binding"/>
    <property type="evidence" value="ECO:0007669"/>
    <property type="project" value="UniProtKB-UniRule"/>
</dbReference>
<dbReference type="GO" id="GO:0034599">
    <property type="term" value="P:cellular response to oxidative stress"/>
    <property type="evidence" value="ECO:0007669"/>
    <property type="project" value="TreeGrafter"/>
</dbReference>
<dbReference type="FunFam" id="1.10.3880.10:FF:000001">
    <property type="entry name" value="Probable Fe(2+)-trafficking protein"/>
    <property type="match status" value="1"/>
</dbReference>
<dbReference type="Gene3D" id="1.10.3880.10">
    <property type="entry name" value="Fe(II) trafficking protein YggX"/>
    <property type="match status" value="1"/>
</dbReference>
<dbReference type="HAMAP" id="MF_00686">
    <property type="entry name" value="Fe_traffic_YggX"/>
    <property type="match status" value="1"/>
</dbReference>
<dbReference type="InterPro" id="IPR007457">
    <property type="entry name" value="Fe_traffick_prot_YggX"/>
</dbReference>
<dbReference type="InterPro" id="IPR036766">
    <property type="entry name" value="Fe_traffick_prot_YggX_sf"/>
</dbReference>
<dbReference type="NCBIfam" id="NF003817">
    <property type="entry name" value="PRK05408.1"/>
    <property type="match status" value="1"/>
</dbReference>
<dbReference type="PANTHER" id="PTHR36965">
    <property type="entry name" value="FE(2+)-TRAFFICKING PROTEIN-RELATED"/>
    <property type="match status" value="1"/>
</dbReference>
<dbReference type="PANTHER" id="PTHR36965:SF1">
    <property type="entry name" value="FE(2+)-TRAFFICKING PROTEIN-RELATED"/>
    <property type="match status" value="1"/>
</dbReference>
<dbReference type="Pfam" id="PF04362">
    <property type="entry name" value="Iron_traffic"/>
    <property type="match status" value="1"/>
</dbReference>
<dbReference type="PIRSF" id="PIRSF029827">
    <property type="entry name" value="Fe_traffic_YggX"/>
    <property type="match status" value="1"/>
</dbReference>
<dbReference type="SUPFAM" id="SSF111148">
    <property type="entry name" value="YggX-like"/>
    <property type="match status" value="1"/>
</dbReference>
<name>FETP_SHIBS</name>